<dbReference type="EC" id="5.4.99.12" evidence="1"/>
<dbReference type="EMBL" id="CP000873">
    <property type="protein sequence ID" value="ABX64195.1"/>
    <property type="molecule type" value="Genomic_DNA"/>
</dbReference>
<dbReference type="RefSeq" id="WP_002965618.1">
    <property type="nucleotide sequence ID" value="NC_010104.1"/>
</dbReference>
<dbReference type="SMR" id="A9MCV8"/>
<dbReference type="GeneID" id="97534918"/>
<dbReference type="KEGG" id="bcs:BCAN_B1053"/>
<dbReference type="HOGENOM" id="CLU_014673_0_2_5"/>
<dbReference type="PhylomeDB" id="A9MCV8"/>
<dbReference type="Proteomes" id="UP000001385">
    <property type="component" value="Chromosome II"/>
</dbReference>
<dbReference type="GO" id="GO:0003723">
    <property type="term" value="F:RNA binding"/>
    <property type="evidence" value="ECO:0007669"/>
    <property type="project" value="InterPro"/>
</dbReference>
<dbReference type="GO" id="GO:0160147">
    <property type="term" value="F:tRNA pseudouridine(38-40) synthase activity"/>
    <property type="evidence" value="ECO:0007669"/>
    <property type="project" value="UniProtKB-EC"/>
</dbReference>
<dbReference type="GO" id="GO:0031119">
    <property type="term" value="P:tRNA pseudouridine synthesis"/>
    <property type="evidence" value="ECO:0007669"/>
    <property type="project" value="UniProtKB-UniRule"/>
</dbReference>
<dbReference type="CDD" id="cd02570">
    <property type="entry name" value="PseudoU_synth_EcTruA"/>
    <property type="match status" value="1"/>
</dbReference>
<dbReference type="FunFam" id="3.30.70.580:FF:000001">
    <property type="entry name" value="tRNA pseudouridine synthase A"/>
    <property type="match status" value="1"/>
</dbReference>
<dbReference type="Gene3D" id="3.30.70.660">
    <property type="entry name" value="Pseudouridine synthase I, catalytic domain, C-terminal subdomain"/>
    <property type="match status" value="1"/>
</dbReference>
<dbReference type="Gene3D" id="3.30.70.580">
    <property type="entry name" value="Pseudouridine synthase I, catalytic domain, N-terminal subdomain"/>
    <property type="match status" value="1"/>
</dbReference>
<dbReference type="HAMAP" id="MF_00171">
    <property type="entry name" value="TruA"/>
    <property type="match status" value="1"/>
</dbReference>
<dbReference type="InterPro" id="IPR020103">
    <property type="entry name" value="PsdUridine_synth_cat_dom_sf"/>
</dbReference>
<dbReference type="InterPro" id="IPR001406">
    <property type="entry name" value="PsdUridine_synth_TruA"/>
</dbReference>
<dbReference type="InterPro" id="IPR020097">
    <property type="entry name" value="PsdUridine_synth_TruA_a/b_dom"/>
</dbReference>
<dbReference type="InterPro" id="IPR020095">
    <property type="entry name" value="PsdUridine_synth_TruA_C"/>
</dbReference>
<dbReference type="InterPro" id="IPR020094">
    <property type="entry name" value="TruA/RsuA/RluB/E/F_N"/>
</dbReference>
<dbReference type="NCBIfam" id="TIGR00071">
    <property type="entry name" value="hisT_truA"/>
    <property type="match status" value="1"/>
</dbReference>
<dbReference type="PANTHER" id="PTHR11142">
    <property type="entry name" value="PSEUDOURIDYLATE SYNTHASE"/>
    <property type="match status" value="1"/>
</dbReference>
<dbReference type="PANTHER" id="PTHR11142:SF0">
    <property type="entry name" value="TRNA PSEUDOURIDINE SYNTHASE-LIKE 1"/>
    <property type="match status" value="1"/>
</dbReference>
<dbReference type="Pfam" id="PF01416">
    <property type="entry name" value="PseudoU_synth_1"/>
    <property type="match status" value="2"/>
</dbReference>
<dbReference type="PIRSF" id="PIRSF001430">
    <property type="entry name" value="tRNA_psdUrid_synth"/>
    <property type="match status" value="1"/>
</dbReference>
<dbReference type="SUPFAM" id="SSF55120">
    <property type="entry name" value="Pseudouridine synthase"/>
    <property type="match status" value="1"/>
</dbReference>
<evidence type="ECO:0000255" key="1">
    <source>
        <dbReference type="HAMAP-Rule" id="MF_00171"/>
    </source>
</evidence>
<protein>
    <recommendedName>
        <fullName evidence="1">tRNA pseudouridine synthase A</fullName>
        <ecNumber evidence="1">5.4.99.12</ecNumber>
    </recommendedName>
    <alternativeName>
        <fullName evidence="1">tRNA pseudouridine(38-40) synthase</fullName>
    </alternativeName>
    <alternativeName>
        <fullName evidence="1">tRNA pseudouridylate synthase I</fullName>
    </alternativeName>
    <alternativeName>
        <fullName evidence="1">tRNA-uridine isomerase I</fullName>
    </alternativeName>
</protein>
<keyword id="KW-0413">Isomerase</keyword>
<keyword id="KW-1185">Reference proteome</keyword>
<keyword id="KW-0819">tRNA processing</keyword>
<sequence>MPRYKLTVEYDGTPYVGWQRQENGHAVQGAIEQAFKKFCGEDLTLSAAGRTDAGVHATAQVAHVDLAKDWGAGKVRDAVNAHLVMADERISILNVEKTTDTFDARFSARARHYLYRIHNRRAPLAVDYQRAWWVQKQLDADAMHEAAQRLLGEHDFTTFRATQCQAKSPVKTLDRLDVTRNGDMVEMRVSARSFLHNQVRSFAGSLMEVGVGRWTADDLQAALEARDRKACGQVAPPYGLYLVGVDYAFPF</sequence>
<proteinExistence type="inferred from homology"/>
<feature type="chain" id="PRO_1000077082" description="tRNA pseudouridine synthase A">
    <location>
        <begin position="1"/>
        <end position="251"/>
    </location>
</feature>
<feature type="active site" description="Nucleophile" evidence="1">
    <location>
        <position position="52"/>
    </location>
</feature>
<feature type="binding site" evidence="1">
    <location>
        <position position="113"/>
    </location>
    <ligand>
        <name>substrate</name>
    </ligand>
</feature>
<reference key="1">
    <citation type="submission" date="2007-10" db="EMBL/GenBank/DDBJ databases">
        <title>Brucella canis ATCC 23365 whole genome shotgun sequencing project.</title>
        <authorList>
            <person name="Setubal J.C."/>
            <person name="Bowns C."/>
            <person name="Boyle S."/>
            <person name="Crasta O.R."/>
            <person name="Czar M.J."/>
            <person name="Dharmanolla C."/>
            <person name="Gillespie J.J."/>
            <person name="Kenyon R.W."/>
            <person name="Lu J."/>
            <person name="Mane S."/>
            <person name="Mohapatra S."/>
            <person name="Nagrani S."/>
            <person name="Purkayastha A."/>
            <person name="Rajasimha H.K."/>
            <person name="Shallom J.M."/>
            <person name="Shallom S."/>
            <person name="Shukla M."/>
            <person name="Snyder E.E."/>
            <person name="Sobral B.W."/>
            <person name="Wattam A.R."/>
            <person name="Will R."/>
            <person name="Williams K."/>
            <person name="Yoo H."/>
            <person name="Bruce D."/>
            <person name="Detter C."/>
            <person name="Munk C."/>
            <person name="Brettin T.S."/>
        </authorList>
    </citation>
    <scope>NUCLEOTIDE SEQUENCE [LARGE SCALE GENOMIC DNA]</scope>
    <source>
        <strain>ATCC 23365 / NCTC 10854 / RM-666</strain>
    </source>
</reference>
<gene>
    <name evidence="1" type="primary">truA</name>
    <name type="ordered locus">BCAN_B1053</name>
</gene>
<accession>A9MCV8</accession>
<name>TRUA_BRUC2</name>
<organism>
    <name type="scientific">Brucella canis (strain ATCC 23365 / NCTC 10854 / RM-666)</name>
    <dbReference type="NCBI Taxonomy" id="483179"/>
    <lineage>
        <taxon>Bacteria</taxon>
        <taxon>Pseudomonadati</taxon>
        <taxon>Pseudomonadota</taxon>
        <taxon>Alphaproteobacteria</taxon>
        <taxon>Hyphomicrobiales</taxon>
        <taxon>Brucellaceae</taxon>
        <taxon>Brucella/Ochrobactrum group</taxon>
        <taxon>Brucella</taxon>
    </lineage>
</organism>
<comment type="function">
    <text evidence="1">Formation of pseudouridine at positions 38, 39 and 40 in the anticodon stem and loop of transfer RNAs.</text>
</comment>
<comment type="catalytic activity">
    <reaction evidence="1">
        <text>uridine(38/39/40) in tRNA = pseudouridine(38/39/40) in tRNA</text>
        <dbReference type="Rhea" id="RHEA:22376"/>
        <dbReference type="Rhea" id="RHEA-COMP:10085"/>
        <dbReference type="Rhea" id="RHEA-COMP:10087"/>
        <dbReference type="ChEBI" id="CHEBI:65314"/>
        <dbReference type="ChEBI" id="CHEBI:65315"/>
        <dbReference type="EC" id="5.4.99.12"/>
    </reaction>
</comment>
<comment type="subunit">
    <text evidence="1">Homodimer.</text>
</comment>
<comment type="similarity">
    <text evidence="1">Belongs to the tRNA pseudouridine synthase TruA family.</text>
</comment>